<reference key="1">
    <citation type="journal article" date="2007" name="Genome Res.">
        <title>Genome characteristics of facultatively symbiotic Frankia sp. strains reflect host range and host plant biogeography.</title>
        <authorList>
            <person name="Normand P."/>
            <person name="Lapierre P."/>
            <person name="Tisa L.S."/>
            <person name="Gogarten J.P."/>
            <person name="Alloisio N."/>
            <person name="Bagnarol E."/>
            <person name="Bassi C.A."/>
            <person name="Berry A.M."/>
            <person name="Bickhart D.M."/>
            <person name="Choisne N."/>
            <person name="Couloux A."/>
            <person name="Cournoyer B."/>
            <person name="Cruveiller S."/>
            <person name="Daubin V."/>
            <person name="Demange N."/>
            <person name="Francino M.P."/>
            <person name="Goltsman E."/>
            <person name="Huang Y."/>
            <person name="Kopp O.R."/>
            <person name="Labarre L."/>
            <person name="Lapidus A."/>
            <person name="Lavire C."/>
            <person name="Marechal J."/>
            <person name="Martinez M."/>
            <person name="Mastronunzio J.E."/>
            <person name="Mullin B.C."/>
            <person name="Niemann J."/>
            <person name="Pujic P."/>
            <person name="Rawnsley T."/>
            <person name="Rouy Z."/>
            <person name="Schenowitz C."/>
            <person name="Sellstedt A."/>
            <person name="Tavares F."/>
            <person name="Tomkins J.P."/>
            <person name="Vallenet D."/>
            <person name="Valverde C."/>
            <person name="Wall L.G."/>
            <person name="Wang Y."/>
            <person name="Medigue C."/>
            <person name="Benson D.R."/>
        </authorList>
    </citation>
    <scope>NUCLEOTIDE SEQUENCE [LARGE SCALE GENOMIC DNA]</scope>
    <source>
        <strain>DSM 45818 / CECT 9043 / HFP020203 / CcI3</strain>
    </source>
</reference>
<proteinExistence type="inferred from homology"/>
<gene>
    <name evidence="1" type="primary">coaE</name>
    <name type="ordered locus">Francci3_1625</name>
</gene>
<dbReference type="EC" id="2.7.1.24" evidence="1"/>
<dbReference type="EMBL" id="CP000249">
    <property type="protein sequence ID" value="ABD11001.1"/>
    <property type="molecule type" value="Genomic_DNA"/>
</dbReference>
<dbReference type="RefSeq" id="WP_011436064.1">
    <property type="nucleotide sequence ID" value="NZ_LRTJ01000018.1"/>
</dbReference>
<dbReference type="SMR" id="Q2JCJ1"/>
<dbReference type="STRING" id="106370.Francci3_1625"/>
<dbReference type="KEGG" id="fra:Francci3_1625"/>
<dbReference type="eggNOG" id="COG0237">
    <property type="taxonomic scope" value="Bacteria"/>
</dbReference>
<dbReference type="HOGENOM" id="CLU_057180_1_1_11"/>
<dbReference type="OrthoDB" id="9812943at2"/>
<dbReference type="PhylomeDB" id="Q2JCJ1"/>
<dbReference type="UniPathway" id="UPA00241">
    <property type="reaction ID" value="UER00356"/>
</dbReference>
<dbReference type="Proteomes" id="UP000001937">
    <property type="component" value="Chromosome"/>
</dbReference>
<dbReference type="GO" id="GO:0005737">
    <property type="term" value="C:cytoplasm"/>
    <property type="evidence" value="ECO:0007669"/>
    <property type="project" value="UniProtKB-SubCell"/>
</dbReference>
<dbReference type="GO" id="GO:0005524">
    <property type="term" value="F:ATP binding"/>
    <property type="evidence" value="ECO:0007669"/>
    <property type="project" value="UniProtKB-UniRule"/>
</dbReference>
<dbReference type="GO" id="GO:0004140">
    <property type="term" value="F:dephospho-CoA kinase activity"/>
    <property type="evidence" value="ECO:0007669"/>
    <property type="project" value="UniProtKB-UniRule"/>
</dbReference>
<dbReference type="GO" id="GO:0015937">
    <property type="term" value="P:coenzyme A biosynthetic process"/>
    <property type="evidence" value="ECO:0007669"/>
    <property type="project" value="UniProtKB-UniRule"/>
</dbReference>
<dbReference type="CDD" id="cd02022">
    <property type="entry name" value="DPCK"/>
    <property type="match status" value="1"/>
</dbReference>
<dbReference type="Gene3D" id="3.40.50.300">
    <property type="entry name" value="P-loop containing nucleotide triphosphate hydrolases"/>
    <property type="match status" value="1"/>
</dbReference>
<dbReference type="HAMAP" id="MF_00376">
    <property type="entry name" value="Dephospho_CoA_kinase"/>
    <property type="match status" value="1"/>
</dbReference>
<dbReference type="InterPro" id="IPR001977">
    <property type="entry name" value="Depp_CoAkinase"/>
</dbReference>
<dbReference type="InterPro" id="IPR027417">
    <property type="entry name" value="P-loop_NTPase"/>
</dbReference>
<dbReference type="NCBIfam" id="TIGR00152">
    <property type="entry name" value="dephospho-CoA kinase"/>
    <property type="match status" value="1"/>
</dbReference>
<dbReference type="NCBIfam" id="NF002879">
    <property type="entry name" value="PRK03333.1"/>
    <property type="match status" value="1"/>
</dbReference>
<dbReference type="PANTHER" id="PTHR10695:SF46">
    <property type="entry name" value="BIFUNCTIONAL COENZYME A SYNTHASE-RELATED"/>
    <property type="match status" value="1"/>
</dbReference>
<dbReference type="PANTHER" id="PTHR10695">
    <property type="entry name" value="DEPHOSPHO-COA KINASE-RELATED"/>
    <property type="match status" value="1"/>
</dbReference>
<dbReference type="Pfam" id="PF01121">
    <property type="entry name" value="CoaE"/>
    <property type="match status" value="1"/>
</dbReference>
<dbReference type="SUPFAM" id="SSF52540">
    <property type="entry name" value="P-loop containing nucleoside triphosphate hydrolases"/>
    <property type="match status" value="1"/>
</dbReference>
<dbReference type="PROSITE" id="PS51219">
    <property type="entry name" value="DPCK"/>
    <property type="match status" value="1"/>
</dbReference>
<accession>Q2JCJ1</accession>
<feature type="chain" id="PRO_0000243289" description="Dephospho-CoA kinase">
    <location>
        <begin position="1"/>
        <end position="229"/>
    </location>
</feature>
<feature type="domain" description="DPCK" evidence="1">
    <location>
        <begin position="3"/>
        <end position="203"/>
    </location>
</feature>
<feature type="region of interest" description="Disordered" evidence="2">
    <location>
        <begin position="203"/>
        <end position="229"/>
    </location>
</feature>
<feature type="binding site" evidence="1">
    <location>
        <begin position="11"/>
        <end position="16"/>
    </location>
    <ligand>
        <name>ATP</name>
        <dbReference type="ChEBI" id="CHEBI:30616"/>
    </ligand>
</feature>
<sequence length="229" mass="23643">MFTVGLTGGIGSGKSAVSACLAARGALLIDADQVARDVVAPGTPGLAAVLAEFGTELANADGGLDREALGRIVFADPAARGRLEAIVHPLIREETARRMGEVSPSGIAVHDIPLLVEVHAEGTYDVVLVVEAPRELRLHRLEGRGLPRDQALARMANQATDSQRRAAADIVVDNGGSLDDLDARIEEVWQDLLARRDAKATAKATAKAETVASGTDTAASGTDTAAPAG</sequence>
<keyword id="KW-0067">ATP-binding</keyword>
<keyword id="KW-0173">Coenzyme A biosynthesis</keyword>
<keyword id="KW-0963">Cytoplasm</keyword>
<keyword id="KW-0418">Kinase</keyword>
<keyword id="KW-0547">Nucleotide-binding</keyword>
<keyword id="KW-1185">Reference proteome</keyword>
<keyword id="KW-0808">Transferase</keyword>
<comment type="function">
    <text evidence="1">Catalyzes the phosphorylation of the 3'-hydroxyl group of dephosphocoenzyme A to form coenzyme A.</text>
</comment>
<comment type="catalytic activity">
    <reaction evidence="1">
        <text>3'-dephospho-CoA + ATP = ADP + CoA + H(+)</text>
        <dbReference type="Rhea" id="RHEA:18245"/>
        <dbReference type="ChEBI" id="CHEBI:15378"/>
        <dbReference type="ChEBI" id="CHEBI:30616"/>
        <dbReference type="ChEBI" id="CHEBI:57287"/>
        <dbReference type="ChEBI" id="CHEBI:57328"/>
        <dbReference type="ChEBI" id="CHEBI:456216"/>
        <dbReference type="EC" id="2.7.1.24"/>
    </reaction>
</comment>
<comment type="pathway">
    <text evidence="1">Cofactor biosynthesis; coenzyme A biosynthesis; CoA from (R)-pantothenate: step 5/5.</text>
</comment>
<comment type="subcellular location">
    <subcellularLocation>
        <location evidence="1">Cytoplasm</location>
    </subcellularLocation>
</comment>
<comment type="similarity">
    <text evidence="1">Belongs to the CoaE family.</text>
</comment>
<evidence type="ECO:0000255" key="1">
    <source>
        <dbReference type="HAMAP-Rule" id="MF_00376"/>
    </source>
</evidence>
<evidence type="ECO:0000256" key="2">
    <source>
        <dbReference type="SAM" id="MobiDB-lite"/>
    </source>
</evidence>
<protein>
    <recommendedName>
        <fullName evidence="1">Dephospho-CoA kinase</fullName>
        <ecNumber evidence="1">2.7.1.24</ecNumber>
    </recommendedName>
    <alternativeName>
        <fullName evidence="1">Dephosphocoenzyme A kinase</fullName>
    </alternativeName>
</protein>
<name>COAE_FRACC</name>
<organism>
    <name type="scientific">Frankia casuarinae (strain DSM 45818 / CECT 9043 / HFP020203 / CcI3)</name>
    <dbReference type="NCBI Taxonomy" id="106370"/>
    <lineage>
        <taxon>Bacteria</taxon>
        <taxon>Bacillati</taxon>
        <taxon>Actinomycetota</taxon>
        <taxon>Actinomycetes</taxon>
        <taxon>Frankiales</taxon>
        <taxon>Frankiaceae</taxon>
        <taxon>Frankia</taxon>
    </lineage>
</organism>